<dbReference type="EMBL" id="AE006641">
    <property type="protein sequence ID" value="AAK40607.1"/>
    <property type="molecule type" value="Genomic_DNA"/>
</dbReference>
<dbReference type="PIR" id="H90168">
    <property type="entry name" value="H90168"/>
</dbReference>
<dbReference type="RefSeq" id="WP_009990543.1">
    <property type="nucleotide sequence ID" value="NC_002754.1"/>
</dbReference>
<dbReference type="PDB" id="2QTF">
    <property type="method" value="X-ray"/>
    <property type="resolution" value="2.00 A"/>
    <property type="chains" value="A=1-356"/>
</dbReference>
<dbReference type="PDB" id="2QTH">
    <property type="method" value="X-ray"/>
    <property type="resolution" value="2.00 A"/>
    <property type="chains" value="A=1-356"/>
</dbReference>
<dbReference type="PDB" id="3KXI">
    <property type="method" value="X-ray"/>
    <property type="resolution" value="2.65 A"/>
    <property type="chains" value="A=1-356"/>
</dbReference>
<dbReference type="PDB" id="3KXK">
    <property type="method" value="X-ray"/>
    <property type="resolution" value="2.35 A"/>
    <property type="chains" value="A/B=1-356"/>
</dbReference>
<dbReference type="PDB" id="3KXL">
    <property type="method" value="X-ray"/>
    <property type="resolution" value="2.50 A"/>
    <property type="chains" value="A/B=1-356"/>
</dbReference>
<dbReference type="PDBsum" id="2QTF"/>
<dbReference type="PDBsum" id="2QTH"/>
<dbReference type="PDBsum" id="3KXI"/>
<dbReference type="PDBsum" id="3KXK"/>
<dbReference type="PDBsum" id="3KXL"/>
<dbReference type="SMR" id="Q980M3"/>
<dbReference type="FunCoup" id="Q980M3">
    <property type="interactions" value="90"/>
</dbReference>
<dbReference type="STRING" id="273057.SSO0269"/>
<dbReference type="PaxDb" id="273057-SSO0269"/>
<dbReference type="EnsemblBacteria" id="AAK40607">
    <property type="protein sequence ID" value="AAK40607"/>
    <property type="gene ID" value="SSO0269"/>
</dbReference>
<dbReference type="GeneID" id="44129241"/>
<dbReference type="KEGG" id="sso:SSO0269"/>
<dbReference type="PATRIC" id="fig|273057.12.peg.263"/>
<dbReference type="eggNOG" id="arCOG00353">
    <property type="taxonomic scope" value="Archaea"/>
</dbReference>
<dbReference type="HOGENOM" id="CLU_019597_2_0_2"/>
<dbReference type="InParanoid" id="Q980M3"/>
<dbReference type="PhylomeDB" id="Q980M3"/>
<dbReference type="BRENDA" id="3.6.5.3">
    <property type="organism ID" value="6163"/>
</dbReference>
<dbReference type="SABIO-RK" id="Q980M3"/>
<dbReference type="EvolutionaryTrace" id="Q980M3"/>
<dbReference type="Proteomes" id="UP000001974">
    <property type="component" value="Chromosome"/>
</dbReference>
<dbReference type="GO" id="GO:0005737">
    <property type="term" value="C:cytoplasm"/>
    <property type="evidence" value="ECO:0000318"/>
    <property type="project" value="GO_Central"/>
</dbReference>
<dbReference type="GO" id="GO:0005525">
    <property type="term" value="F:GTP binding"/>
    <property type="evidence" value="ECO:0007669"/>
    <property type="project" value="UniProtKB-UniRule"/>
</dbReference>
<dbReference type="GO" id="GO:0003924">
    <property type="term" value="F:GTPase activity"/>
    <property type="evidence" value="ECO:0007669"/>
    <property type="project" value="UniProtKB-UniRule"/>
</dbReference>
<dbReference type="GO" id="GO:0046872">
    <property type="term" value="F:metal ion binding"/>
    <property type="evidence" value="ECO:0007669"/>
    <property type="project" value="UniProtKB-KW"/>
</dbReference>
<dbReference type="GO" id="GO:0043022">
    <property type="term" value="F:ribosome binding"/>
    <property type="evidence" value="ECO:0000318"/>
    <property type="project" value="GO_Central"/>
</dbReference>
<dbReference type="CDD" id="cd01878">
    <property type="entry name" value="HflX"/>
    <property type="match status" value="1"/>
</dbReference>
<dbReference type="Gene3D" id="6.10.250.3070">
    <property type="match status" value="1"/>
</dbReference>
<dbReference type="Gene3D" id="3.40.50.11060">
    <property type="entry name" value="GTPase HflX, N-terminal domain"/>
    <property type="match status" value="1"/>
</dbReference>
<dbReference type="Gene3D" id="3.40.50.300">
    <property type="entry name" value="P-loop containing nucleotide triphosphate hydrolases"/>
    <property type="match status" value="1"/>
</dbReference>
<dbReference type="HAMAP" id="MF_00900">
    <property type="entry name" value="GTPase_HflX"/>
    <property type="match status" value="1"/>
</dbReference>
<dbReference type="InterPro" id="IPR030394">
    <property type="entry name" value="G_HFLX_dom"/>
</dbReference>
<dbReference type="InterPro" id="IPR006073">
    <property type="entry name" value="GTP-bd"/>
</dbReference>
<dbReference type="InterPro" id="IPR032305">
    <property type="entry name" value="GTP-bd_M"/>
</dbReference>
<dbReference type="InterPro" id="IPR016496">
    <property type="entry name" value="GTPase_HflX"/>
</dbReference>
<dbReference type="InterPro" id="IPR025121">
    <property type="entry name" value="GTPase_HflX_N"/>
</dbReference>
<dbReference type="InterPro" id="IPR042108">
    <property type="entry name" value="GTPase_HflX_N_sf"/>
</dbReference>
<dbReference type="InterPro" id="IPR027417">
    <property type="entry name" value="P-loop_NTPase"/>
</dbReference>
<dbReference type="InterPro" id="IPR005225">
    <property type="entry name" value="Small_GTP-bd"/>
</dbReference>
<dbReference type="NCBIfam" id="TIGR03156">
    <property type="entry name" value="GTP_HflX"/>
    <property type="match status" value="1"/>
</dbReference>
<dbReference type="NCBIfam" id="TIGR00231">
    <property type="entry name" value="small_GTP"/>
    <property type="match status" value="1"/>
</dbReference>
<dbReference type="PANTHER" id="PTHR10229">
    <property type="entry name" value="GTP-BINDING PROTEIN HFLX"/>
    <property type="match status" value="1"/>
</dbReference>
<dbReference type="PANTHER" id="PTHR10229:SF8">
    <property type="entry name" value="GTPASE HFLX"/>
    <property type="match status" value="1"/>
</dbReference>
<dbReference type="Pfam" id="PF16360">
    <property type="entry name" value="GTP-bdg_M"/>
    <property type="match status" value="1"/>
</dbReference>
<dbReference type="Pfam" id="PF13167">
    <property type="entry name" value="GTP-bdg_N"/>
    <property type="match status" value="1"/>
</dbReference>
<dbReference type="Pfam" id="PF01926">
    <property type="entry name" value="MMR_HSR1"/>
    <property type="match status" value="1"/>
</dbReference>
<dbReference type="PIRSF" id="PIRSF006809">
    <property type="entry name" value="GTP-binding_hflX_prd"/>
    <property type="match status" value="1"/>
</dbReference>
<dbReference type="PRINTS" id="PR00326">
    <property type="entry name" value="GTP1OBG"/>
</dbReference>
<dbReference type="SUPFAM" id="SSF52540">
    <property type="entry name" value="P-loop containing nucleoside triphosphate hydrolases"/>
    <property type="match status" value="1"/>
</dbReference>
<dbReference type="PROSITE" id="PS51705">
    <property type="entry name" value="G_HFLX"/>
    <property type="match status" value="1"/>
</dbReference>
<organism>
    <name type="scientific">Saccharolobus solfataricus (strain ATCC 35092 / DSM 1617 / JCM 11322 / P2)</name>
    <name type="common">Sulfolobus solfataricus</name>
    <dbReference type="NCBI Taxonomy" id="273057"/>
    <lineage>
        <taxon>Archaea</taxon>
        <taxon>Thermoproteota</taxon>
        <taxon>Thermoprotei</taxon>
        <taxon>Sulfolobales</taxon>
        <taxon>Sulfolobaceae</taxon>
        <taxon>Saccharolobus</taxon>
    </lineage>
</organism>
<name>HFLX_SACS2</name>
<gene>
    <name evidence="1" type="primary">hflX</name>
    <name type="ordered locus">SSO0269</name>
</gene>
<keyword id="KW-0002">3D-structure</keyword>
<keyword id="KW-0963">Cytoplasm</keyword>
<keyword id="KW-0342">GTP-binding</keyword>
<keyword id="KW-0460">Magnesium</keyword>
<keyword id="KW-0479">Metal-binding</keyword>
<keyword id="KW-0547">Nucleotide-binding</keyword>
<keyword id="KW-1185">Reference proteome</keyword>
<comment type="function">
    <text evidence="1 2 4">GTPase that associates with the 50S ribosomal subunit and may have a role during protein synthesis or ribosome biogenesis. Specific for GTP.</text>
</comment>
<comment type="cofactor">
    <cofactor evidence="1">
        <name>Mg(2+)</name>
        <dbReference type="ChEBI" id="CHEBI:18420"/>
    </cofactor>
</comment>
<comment type="activity regulation">
    <text evidence="2 4">GTPase activity is stimulated by the presence of 50S ribosomal subunits. Hydrolysis is probably regulated by the HflX N-terminal domain.</text>
</comment>
<comment type="biophysicochemical properties">
    <kinetics>
        <KM evidence="3">5.3 uM for GTP</KM>
    </kinetics>
</comment>
<comment type="subunit">
    <text evidence="1 2 3 4">Monomer. Associates with the 50S ribosomal subunit. Does not associate with 70S ribosomes.</text>
</comment>
<comment type="subcellular location">
    <subcellularLocation>
        <location evidence="1">Cytoplasm</location>
    </subcellularLocation>
    <text evidence="1">May associate with membranes.</text>
</comment>
<comment type="similarity">
    <text evidence="1">Belongs to the TRAFAC class OBG-HflX-like GTPase superfamily. HflX GTPase family.</text>
</comment>
<proteinExistence type="evidence at protein level"/>
<sequence>MKTAALFVSKEFEEEAIALVEGANYKVTSIYKLPKSPNVKFYIQYDKLQQIKNDEEISTLIIFEQLKPRHFINIRRELKGKEVLDKILLLLEIFALHAGSKEAKMQIELARLKYELPIIKETYTKSKIGEQQGPLGAGTYGVESTIKFYKRRINKLMKELESIKIFKEKSIESNKRNNIPSIGIVGYTNSGKTSLFNSLTGLTQKVDTKLFTTMSPKRYAIPINNRKIMLVDTVGFIRGIPPQIVDAFFVTLSEAKYSDALILVIDSTFSENLLIETLQSSFEILREIGVSGKPILVTLNKIDKINGDLYKKLDLVEKLSKELYSPIFDVIPISALKRTNLELLRDKIYQLATQLS</sequence>
<feature type="chain" id="PRO_0000412528" description="GTPase HflX">
    <location>
        <begin position="1"/>
        <end position="356"/>
    </location>
</feature>
<feature type="domain" description="Hflx-type G" evidence="1">
    <location>
        <begin position="180"/>
        <end position="356"/>
    </location>
</feature>
<feature type="binding site" evidence="1 5 6">
    <location>
        <begin position="186"/>
        <end position="193"/>
    </location>
    <ligand>
        <name>GTP</name>
        <dbReference type="ChEBI" id="CHEBI:37565"/>
    </ligand>
</feature>
<feature type="binding site" evidence="1">
    <location>
        <position position="193"/>
    </location>
    <ligand>
        <name>Mg(2+)</name>
        <dbReference type="ChEBI" id="CHEBI:18420"/>
    </ligand>
</feature>
<feature type="binding site" evidence="1">
    <location>
        <begin position="211"/>
        <end position="215"/>
    </location>
    <ligand>
        <name>GTP</name>
        <dbReference type="ChEBI" id="CHEBI:37565"/>
    </ligand>
</feature>
<feature type="binding site" evidence="1">
    <location>
        <position position="213"/>
    </location>
    <ligand>
        <name>Mg(2+)</name>
        <dbReference type="ChEBI" id="CHEBI:18420"/>
    </ligand>
</feature>
<feature type="binding site" evidence="1">
    <location>
        <begin position="232"/>
        <end position="235"/>
    </location>
    <ligand>
        <name>GTP</name>
        <dbReference type="ChEBI" id="CHEBI:37565"/>
    </ligand>
</feature>
<feature type="binding site" evidence="1 5 6">
    <location>
        <begin position="300"/>
        <end position="303"/>
    </location>
    <ligand>
        <name>GTP</name>
        <dbReference type="ChEBI" id="CHEBI:37565"/>
    </ligand>
</feature>
<feature type="binding site" evidence="1 5 6">
    <location>
        <begin position="334"/>
        <end position="336"/>
    </location>
    <ligand>
        <name>GTP</name>
        <dbReference type="ChEBI" id="CHEBI:37565"/>
    </ligand>
</feature>
<feature type="mutagenesis site" description="Loss of GTPase activity." evidence="3">
    <original>N</original>
    <variation>P</variation>
    <location>
        <position position="189"/>
    </location>
</feature>
<feature type="mutagenesis site" description="Loss of GTPase activity." evidence="3">
    <original>T</original>
    <variation>N</variation>
    <location>
        <position position="193"/>
    </location>
</feature>
<feature type="mutagenesis site" description="Decrease in GTPase activity." evidence="3">
    <original>T</original>
    <variation>V</variation>
    <location>
        <position position="213"/>
    </location>
</feature>
<feature type="mutagenesis site" description="Loss of GTPase activity." evidence="3">
    <original>G</original>
    <variation>P</variation>
    <location>
        <position position="235"/>
    </location>
</feature>
<feature type="mutagenesis site" description="Decrease in GTPase activity." evidence="3">
    <original>G</original>
    <variation>S</variation>
    <location>
        <position position="235"/>
    </location>
</feature>
<feature type="mutagenesis site" description="Increase in KM for GTP and in GTPase activity." evidence="3">
    <original>F</original>
    <variation>P</variation>
    <location>
        <position position="236"/>
    </location>
</feature>
<feature type="strand" evidence="7">
    <location>
        <begin position="2"/>
        <end position="7"/>
    </location>
</feature>
<feature type="turn" evidence="7">
    <location>
        <begin position="10"/>
        <end position="12"/>
    </location>
</feature>
<feature type="helix" evidence="7">
    <location>
        <begin position="13"/>
        <end position="22"/>
    </location>
</feature>
<feature type="strand" evidence="7">
    <location>
        <begin position="25"/>
        <end position="31"/>
    </location>
</feature>
<feature type="turn" evidence="7">
    <location>
        <begin position="39"/>
        <end position="41"/>
    </location>
</feature>
<feature type="helix" evidence="7">
    <location>
        <begin position="45"/>
        <end position="52"/>
    </location>
</feature>
<feature type="strand" evidence="7">
    <location>
        <begin position="59"/>
        <end position="64"/>
    </location>
</feature>
<feature type="helix" evidence="7">
    <location>
        <begin position="68"/>
        <end position="78"/>
    </location>
</feature>
<feature type="strand" evidence="7">
    <location>
        <begin position="82"/>
        <end position="84"/>
    </location>
</feature>
<feature type="helix" evidence="7">
    <location>
        <begin position="86"/>
        <end position="97"/>
    </location>
</feature>
<feature type="helix" evidence="7">
    <location>
        <begin position="101"/>
        <end position="121"/>
    </location>
</feature>
<feature type="helix" evidence="7">
    <location>
        <begin position="145"/>
        <end position="164"/>
    </location>
</feature>
<feature type="strand" evidence="7">
    <location>
        <begin position="181"/>
        <end position="185"/>
    </location>
</feature>
<feature type="turn" evidence="8">
    <location>
        <begin position="188"/>
        <end position="191"/>
    </location>
</feature>
<feature type="helix" evidence="7">
    <location>
        <begin position="192"/>
        <end position="200"/>
    </location>
</feature>
<feature type="strand" evidence="7">
    <location>
        <begin position="218"/>
        <end position="223"/>
    </location>
</feature>
<feature type="strand" evidence="7">
    <location>
        <begin position="226"/>
        <end position="232"/>
    </location>
</feature>
<feature type="helix" evidence="7">
    <location>
        <begin position="242"/>
        <end position="244"/>
    </location>
</feature>
<feature type="helix" evidence="7">
    <location>
        <begin position="245"/>
        <end position="253"/>
    </location>
</feature>
<feature type="helix" evidence="7">
    <location>
        <begin position="254"/>
        <end position="257"/>
    </location>
</feature>
<feature type="strand" evidence="7">
    <location>
        <begin position="258"/>
        <end position="266"/>
    </location>
</feature>
<feature type="helix" evidence="7">
    <location>
        <begin position="271"/>
        <end position="288"/>
    </location>
</feature>
<feature type="strand" evidence="7">
    <location>
        <begin position="295"/>
        <end position="300"/>
    </location>
</feature>
<feature type="helix" evidence="7">
    <location>
        <begin position="302"/>
        <end position="304"/>
    </location>
</feature>
<feature type="helix" evidence="7">
    <location>
        <begin position="309"/>
        <end position="323"/>
    </location>
</feature>
<feature type="strand" evidence="7">
    <location>
        <begin position="327"/>
        <end position="332"/>
    </location>
</feature>
<feature type="turn" evidence="7">
    <location>
        <begin position="335"/>
        <end position="338"/>
    </location>
</feature>
<feature type="helix" evidence="7">
    <location>
        <begin position="341"/>
        <end position="355"/>
    </location>
</feature>
<accession>Q980M3</accession>
<protein>
    <recommendedName>
        <fullName evidence="1">GTPase HflX</fullName>
    </recommendedName>
    <alternativeName>
        <fullName evidence="1">GTP-binding protein HflX</fullName>
    </alternativeName>
</protein>
<evidence type="ECO:0000255" key="1">
    <source>
        <dbReference type="HAMAP-Rule" id="MF_00900"/>
    </source>
</evidence>
<evidence type="ECO:0000269" key="2">
    <source>
    </source>
</evidence>
<evidence type="ECO:0000269" key="3">
    <source>
    </source>
</evidence>
<evidence type="ECO:0000269" key="4">
    <source>
    </source>
</evidence>
<evidence type="ECO:0000305" key="5">
    <source>
    </source>
</evidence>
<evidence type="ECO:0000305" key="6">
    <source>
    </source>
</evidence>
<evidence type="ECO:0007829" key="7">
    <source>
        <dbReference type="PDB" id="2QTF"/>
    </source>
</evidence>
<evidence type="ECO:0007829" key="8">
    <source>
        <dbReference type="PDB" id="3KXK"/>
    </source>
</evidence>
<reference key="1">
    <citation type="journal article" date="2001" name="Proc. Natl. Acad. Sci. U.S.A.">
        <title>The complete genome of the crenarchaeon Sulfolobus solfataricus P2.</title>
        <authorList>
            <person name="She Q."/>
            <person name="Singh R.K."/>
            <person name="Confalonieri F."/>
            <person name="Zivanovic Y."/>
            <person name="Allard G."/>
            <person name="Awayez M.J."/>
            <person name="Chan-Weiher C.C.-Y."/>
            <person name="Clausen I.G."/>
            <person name="Curtis B.A."/>
            <person name="De Moors A."/>
            <person name="Erauso G."/>
            <person name="Fletcher C."/>
            <person name="Gordon P.M.K."/>
            <person name="Heikamp-de Jong I."/>
            <person name="Jeffries A.C."/>
            <person name="Kozera C.J."/>
            <person name="Medina N."/>
            <person name="Peng X."/>
            <person name="Thi-Ngoc H.P."/>
            <person name="Redder P."/>
            <person name="Schenk M.E."/>
            <person name="Theriault C."/>
            <person name="Tolstrup N."/>
            <person name="Charlebois R.L."/>
            <person name="Doolittle W.F."/>
            <person name="Duguet M."/>
            <person name="Gaasterland T."/>
            <person name="Garrett R.A."/>
            <person name="Ragan M.A."/>
            <person name="Sensen C.W."/>
            <person name="Van der Oost J."/>
        </authorList>
    </citation>
    <scope>NUCLEOTIDE SEQUENCE [LARGE SCALE GENOMIC DNA]</scope>
    <source>
        <strain>ATCC 35092 / DSM 1617 / JCM 11322 / P2</strain>
    </source>
</reference>
<reference key="2">
    <citation type="journal article" date="2011" name="J. Bacteriol.">
        <title>An HflX-Type GTPase from Sulfolobus solfataricus binds to the 50S ribosomal subunit in all nucleotide-bound states.</title>
        <authorList>
            <person name="Blombach F."/>
            <person name="Launay H."/>
            <person name="Zorraquino V."/>
            <person name="Swarts D.C."/>
            <person name="Cabrita L.D."/>
            <person name="Benelli D."/>
            <person name="Christodoulou J."/>
            <person name="Londei P."/>
            <person name="van der Oost J."/>
        </authorList>
    </citation>
    <scope>FUNCTION</scope>
    <scope>ACTIVITY REGULATION</scope>
    <scope>SUBUNIT</scope>
    <scope>INTERACTION WITH 50S SUBUNIT</scope>
    <source>
        <strain>ATCC 35092 / DSM 1617 / JCM 11322 / P2</strain>
    </source>
</reference>
<reference key="3">
    <citation type="journal article" date="2010" name="J. Biochem.">
        <title>Functional study on GTP hydrolysis by the GTP-binding protein from Sulfolobus solfataricus, a member of the HflX family.</title>
        <authorList>
            <person name="Huang B."/>
            <person name="Wu H."/>
            <person name="Hao N."/>
            <person name="Blombach F."/>
            <person name="van der Oost J."/>
            <person name="Li X."/>
            <person name="Zhang X.C."/>
            <person name="Rao Z."/>
        </authorList>
    </citation>
    <scope>X-RAY CRYSTALLOGRAPHY (2.35 ANGSTROMS) OF WILD-TYPE IN COMPLEX WITH GDP AND OF MUTANTS PRO-235 AND SER-235</scope>
    <scope>BIOPHYSICOCHEMICAL PROPERTIES</scope>
    <scope>MUTAGENESIS OF ASN-189; THR-193; THR-213; GLY-235 AND PHE-236</scope>
</reference>
<reference key="4">
    <citation type="journal article" date="2010" name="Proteins">
        <title>Structure of the ribosome associating GTPase HflX.</title>
        <authorList>
            <person name="Wu H."/>
            <person name="Sun L."/>
            <person name="Blombach F."/>
            <person name="Brouns S.J."/>
            <person name="Snijders A.P."/>
            <person name="Lorenzen K."/>
            <person name="van den Heuvel R.H."/>
            <person name="Heck A.J."/>
            <person name="Fu S."/>
            <person name="Li X."/>
            <person name="Zhang X.C."/>
            <person name="Rao Z."/>
            <person name="van der Oost J."/>
        </authorList>
    </citation>
    <scope>X-RAY CRYSTALLOGRAPHY (2.00 ANGSTROMS) IN COMPLEX WITH GDP</scope>
    <scope>FUNCTION AS A GTPASE</scope>
    <scope>ACTIVITY REGULATION</scope>
    <scope>SUBUNIT</scope>
</reference>